<name>VU25_HHV6U</name>
<evidence type="ECO:0000305" key="1"/>
<feature type="chain" id="PRO_0000116321" description="Protein U25">
    <location>
        <begin position="1"/>
        <end position="316"/>
    </location>
</feature>
<comment type="similarity">
    <text evidence="1">Belongs to the herpesviridae US22 family.</text>
</comment>
<sequence length="316" mass="37096">MGLSSSKDIDLLVNFIENRQGATLALPWPEDYRLTLHSVENIPEISREDVQNWAKTYMCCGGELVVVGVIHKAKTRTCRGPIVLQGARGHIYVYNGFFDRSLYHVASSFHDLFSNGLRFFYPIYETCDYALDSTVALDMIAHSKSFSELLHYRNERKNAFFTLKTYPYKTFVRFCNLSMTEFSSRHLIQWRRKLQTSLLDVVFIVQHNFFGDWRELVVVFDGHGMLFCVDREESLLFIARNMSDFLKIGCLRYNENRRLHTQWFTQDTDYIKQVDEMFSRDVLCPLREHCQRSRRERGLLKICTSLVRGVNCIERG</sequence>
<protein>
    <recommendedName>
        <fullName>Protein U25</fullName>
    </recommendedName>
</protein>
<organismHost>
    <name type="scientific">Homo sapiens</name>
    <name type="common">Human</name>
    <dbReference type="NCBI Taxonomy" id="9606"/>
</organismHost>
<organism>
    <name type="scientific">Human herpesvirus 6A (strain Uganda-1102)</name>
    <name type="common">HHV-6 variant A</name>
    <name type="synonym">Human B lymphotropic virus</name>
    <dbReference type="NCBI Taxonomy" id="10370"/>
    <lineage>
        <taxon>Viruses</taxon>
        <taxon>Duplodnaviria</taxon>
        <taxon>Heunggongvirae</taxon>
        <taxon>Peploviricota</taxon>
        <taxon>Herviviricetes</taxon>
        <taxon>Herpesvirales</taxon>
        <taxon>Orthoherpesviridae</taxon>
        <taxon>Betaherpesvirinae</taxon>
        <taxon>Roseolovirus</taxon>
        <taxon>Roseolovirus humanbeta6a</taxon>
        <taxon>Human betaherpesvirus 6A</taxon>
    </lineage>
</organism>
<reference key="1">
    <citation type="journal article" date="1995" name="Virology">
        <title>The DNA sequence of human herpesvirus-6: structure, coding content, and genome evolution.</title>
        <authorList>
            <person name="Gompels U.A."/>
            <person name="Nicholas J."/>
            <person name="Lawrence G.L."/>
            <person name="Jones M."/>
            <person name="Thomson B.J."/>
            <person name="Martin M.E.D."/>
            <person name="Efstathiou S."/>
            <person name="Craxton M.A."/>
            <person name="Macaulay H.A."/>
        </authorList>
    </citation>
    <scope>NUCLEOTIDE SEQUENCE [LARGE SCALE GENOMIC DNA]</scope>
</reference>
<gene>
    <name type="primary">U25</name>
    <name type="synonym">EPLF3</name>
</gene>
<keyword id="KW-1185">Reference proteome</keyword>
<dbReference type="EMBL" id="X83413">
    <property type="protein sequence ID" value="CAA58405.1"/>
    <property type="molecule type" value="Genomic_DNA"/>
</dbReference>
<dbReference type="RefSeq" id="NP_042918.1">
    <property type="nucleotide sequence ID" value="NC_001664.2"/>
</dbReference>
<dbReference type="DNASU" id="1487903"/>
<dbReference type="GeneID" id="1487903"/>
<dbReference type="KEGG" id="vg:1487903"/>
<dbReference type="Proteomes" id="UP000009295">
    <property type="component" value="Segment"/>
</dbReference>
<dbReference type="InterPro" id="IPR003360">
    <property type="entry name" value="US22-like"/>
</dbReference>
<dbReference type="Pfam" id="PF02393">
    <property type="entry name" value="US22"/>
    <property type="match status" value="2"/>
</dbReference>
<proteinExistence type="inferred from homology"/>
<accession>P52527</accession>